<sequence length="417" mass="44370">MSEKSREYYTIARDLMPGGVSSPVRAIQPYPFYTVRGSGSRIYTVDGTELIDCCGAYGPLILGHACKPVGDAISSALDDGWLYGTPTPAEIDLAQILIADHPSIEMVRFVTTGSEATMAAIRLARGYTGKSDIIKTEGGFHGAHDGVLVQAGSGCTTLGQPDSAGVLSDIVRHTRQVPYNDTESLISLVDKSGDEIAAMILEPVMGNIGPVLPKPGYLQEVRKITAEHDILLIFDEVITGYRVGIGGAQKLFGVTPDITTLGKIIGGGLPLSAFGGKRKIMELIAPAGPVYQAGTFSGNPLSLAAGVAALREIHARKGMYTLLDTATTVIGEACQGKGGSFVKLGSMFKFFFRSSVPENYAQAKESDTTKFRAFWEKMLEKGIFLPPSQFETNFLSAAHSDSDVEYLSSAYASCLSA</sequence>
<keyword id="KW-0963">Cytoplasm</keyword>
<keyword id="KW-0413">Isomerase</keyword>
<keyword id="KW-0627">Porphyrin biosynthesis</keyword>
<keyword id="KW-0663">Pyridoxal phosphate</keyword>
<keyword id="KW-1185">Reference proteome</keyword>
<protein>
    <recommendedName>
        <fullName evidence="1">Glutamate-1-semialdehyde 2,1-aminomutase</fullName>
        <shortName evidence="1">GSA</shortName>
        <ecNumber evidence="1">5.4.3.8</ecNumber>
    </recommendedName>
    <alternativeName>
        <fullName evidence="1">Glutamate-1-semialdehyde aminotransferase</fullName>
        <shortName evidence="1">GSA-AT</shortName>
    </alternativeName>
</protein>
<comment type="catalytic activity">
    <reaction evidence="1">
        <text>(S)-4-amino-5-oxopentanoate = 5-aminolevulinate</text>
        <dbReference type="Rhea" id="RHEA:14265"/>
        <dbReference type="ChEBI" id="CHEBI:57501"/>
        <dbReference type="ChEBI" id="CHEBI:356416"/>
        <dbReference type="EC" id="5.4.3.8"/>
    </reaction>
</comment>
<comment type="cofactor">
    <cofactor evidence="1">
        <name>pyridoxal 5'-phosphate</name>
        <dbReference type="ChEBI" id="CHEBI:597326"/>
    </cofactor>
</comment>
<comment type="pathway">
    <text evidence="1">Porphyrin-containing compound metabolism; protoporphyrin-IX biosynthesis; 5-aminolevulinate from L-glutamyl-tRNA(Glu): step 2/2.</text>
</comment>
<comment type="subcellular location">
    <subcellularLocation>
        <location evidence="1">Cytoplasm</location>
    </subcellularLocation>
</comment>
<comment type="similarity">
    <text evidence="1">Belongs to the class-III pyridoxal-phosphate-dependent aminotransferase family. HemL subfamily.</text>
</comment>
<feature type="chain" id="PRO_0000382409" description="Glutamate-1-semialdehyde 2,1-aminomutase">
    <location>
        <begin position="1"/>
        <end position="417"/>
    </location>
</feature>
<feature type="modified residue" description="N6-(pyridoxal phosphate)lysine" evidence="1">
    <location>
        <position position="263"/>
    </location>
</feature>
<proteinExistence type="inferred from homology"/>
<organism>
    <name type="scientific">Methanospirillum hungatei JF-1 (strain ATCC 27890 / DSM 864 / NBRC 100397 / JF-1)</name>
    <dbReference type="NCBI Taxonomy" id="323259"/>
    <lineage>
        <taxon>Archaea</taxon>
        <taxon>Methanobacteriati</taxon>
        <taxon>Methanobacteriota</taxon>
        <taxon>Stenosarchaea group</taxon>
        <taxon>Methanomicrobia</taxon>
        <taxon>Methanomicrobiales</taxon>
        <taxon>Methanospirillaceae</taxon>
        <taxon>Methanospirillum</taxon>
    </lineage>
</organism>
<evidence type="ECO:0000255" key="1">
    <source>
        <dbReference type="HAMAP-Rule" id="MF_00375"/>
    </source>
</evidence>
<reference key="1">
    <citation type="journal article" date="2016" name="Stand. Genomic Sci.">
        <title>Complete genome sequence of Methanospirillum hungatei type strain JF1.</title>
        <authorList>
            <person name="Gunsalus R.P."/>
            <person name="Cook L.E."/>
            <person name="Crable B."/>
            <person name="Rohlin L."/>
            <person name="McDonald E."/>
            <person name="Mouttaki H."/>
            <person name="Sieber J.R."/>
            <person name="Poweleit N."/>
            <person name="Zhou H."/>
            <person name="Lapidus A.L."/>
            <person name="Daligault H.E."/>
            <person name="Land M."/>
            <person name="Gilna P."/>
            <person name="Ivanova N."/>
            <person name="Kyrpides N."/>
            <person name="Culley D.E."/>
            <person name="McInerney M.J."/>
        </authorList>
    </citation>
    <scope>NUCLEOTIDE SEQUENCE [LARGE SCALE GENOMIC DNA]</scope>
    <source>
        <strain>ATCC 27890 / DSM 864 / NBRC 100397 / JF-1</strain>
    </source>
</reference>
<name>GSA_METHJ</name>
<accession>Q2FTK5</accession>
<dbReference type="EC" id="5.4.3.8" evidence="1"/>
<dbReference type="EMBL" id="CP000254">
    <property type="protein sequence ID" value="ABD42259.1"/>
    <property type="molecule type" value="Genomic_DNA"/>
</dbReference>
<dbReference type="RefSeq" id="WP_011449516.1">
    <property type="nucleotide sequence ID" value="NC_007796.1"/>
</dbReference>
<dbReference type="SMR" id="Q2FTK5"/>
<dbReference type="FunCoup" id="Q2FTK5">
    <property type="interactions" value="150"/>
</dbReference>
<dbReference type="STRING" id="323259.Mhun_2560"/>
<dbReference type="EnsemblBacteria" id="ABD42259">
    <property type="protein sequence ID" value="ABD42259"/>
    <property type="gene ID" value="Mhun_2560"/>
</dbReference>
<dbReference type="GeneID" id="3922817"/>
<dbReference type="KEGG" id="mhu:Mhun_2560"/>
<dbReference type="eggNOG" id="arCOG00918">
    <property type="taxonomic scope" value="Archaea"/>
</dbReference>
<dbReference type="HOGENOM" id="CLU_016922_1_5_2"/>
<dbReference type="InParanoid" id="Q2FTK5"/>
<dbReference type="OrthoDB" id="6524at2157"/>
<dbReference type="UniPathway" id="UPA00251">
    <property type="reaction ID" value="UER00317"/>
</dbReference>
<dbReference type="Proteomes" id="UP000001941">
    <property type="component" value="Chromosome"/>
</dbReference>
<dbReference type="GO" id="GO:0005737">
    <property type="term" value="C:cytoplasm"/>
    <property type="evidence" value="ECO:0007669"/>
    <property type="project" value="UniProtKB-SubCell"/>
</dbReference>
<dbReference type="GO" id="GO:0042286">
    <property type="term" value="F:glutamate-1-semialdehyde 2,1-aminomutase activity"/>
    <property type="evidence" value="ECO:0007669"/>
    <property type="project" value="UniProtKB-UniRule"/>
</dbReference>
<dbReference type="GO" id="GO:0030170">
    <property type="term" value="F:pyridoxal phosphate binding"/>
    <property type="evidence" value="ECO:0007669"/>
    <property type="project" value="InterPro"/>
</dbReference>
<dbReference type="GO" id="GO:0008483">
    <property type="term" value="F:transaminase activity"/>
    <property type="evidence" value="ECO:0007669"/>
    <property type="project" value="InterPro"/>
</dbReference>
<dbReference type="GO" id="GO:0006782">
    <property type="term" value="P:protoporphyrinogen IX biosynthetic process"/>
    <property type="evidence" value="ECO:0007669"/>
    <property type="project" value="UniProtKB-UniRule"/>
</dbReference>
<dbReference type="CDD" id="cd00610">
    <property type="entry name" value="OAT_like"/>
    <property type="match status" value="1"/>
</dbReference>
<dbReference type="FunFam" id="3.40.640.10:FF:000021">
    <property type="entry name" value="Glutamate-1-semialdehyde 2,1-aminomutase"/>
    <property type="match status" value="1"/>
</dbReference>
<dbReference type="Gene3D" id="3.90.1150.10">
    <property type="entry name" value="Aspartate Aminotransferase, domain 1"/>
    <property type="match status" value="1"/>
</dbReference>
<dbReference type="Gene3D" id="3.40.640.10">
    <property type="entry name" value="Type I PLP-dependent aspartate aminotransferase-like (Major domain)"/>
    <property type="match status" value="1"/>
</dbReference>
<dbReference type="HAMAP" id="MF_00375">
    <property type="entry name" value="HemL_aminotrans_3"/>
    <property type="match status" value="1"/>
</dbReference>
<dbReference type="InterPro" id="IPR004639">
    <property type="entry name" value="4pyrrol_synth_GluAld_NH2Trfase"/>
</dbReference>
<dbReference type="InterPro" id="IPR005814">
    <property type="entry name" value="Aminotrans_3"/>
</dbReference>
<dbReference type="InterPro" id="IPR049704">
    <property type="entry name" value="Aminotrans_3_PPA_site"/>
</dbReference>
<dbReference type="InterPro" id="IPR015424">
    <property type="entry name" value="PyrdxlP-dep_Trfase"/>
</dbReference>
<dbReference type="InterPro" id="IPR015421">
    <property type="entry name" value="PyrdxlP-dep_Trfase_major"/>
</dbReference>
<dbReference type="InterPro" id="IPR015422">
    <property type="entry name" value="PyrdxlP-dep_Trfase_small"/>
</dbReference>
<dbReference type="NCBIfam" id="TIGR00713">
    <property type="entry name" value="hemL"/>
    <property type="match status" value="1"/>
</dbReference>
<dbReference type="NCBIfam" id="NF000818">
    <property type="entry name" value="PRK00062.1"/>
    <property type="match status" value="1"/>
</dbReference>
<dbReference type="PANTHER" id="PTHR43713">
    <property type="entry name" value="GLUTAMATE-1-SEMIALDEHYDE 2,1-AMINOMUTASE"/>
    <property type="match status" value="1"/>
</dbReference>
<dbReference type="PANTHER" id="PTHR43713:SF3">
    <property type="entry name" value="GLUTAMATE-1-SEMIALDEHYDE 2,1-AMINOMUTASE 1, CHLOROPLASTIC-RELATED"/>
    <property type="match status" value="1"/>
</dbReference>
<dbReference type="Pfam" id="PF00202">
    <property type="entry name" value="Aminotran_3"/>
    <property type="match status" value="1"/>
</dbReference>
<dbReference type="SUPFAM" id="SSF53383">
    <property type="entry name" value="PLP-dependent transferases"/>
    <property type="match status" value="1"/>
</dbReference>
<dbReference type="PROSITE" id="PS00600">
    <property type="entry name" value="AA_TRANSFER_CLASS_3"/>
    <property type="match status" value="1"/>
</dbReference>
<gene>
    <name evidence="1" type="primary">hemL</name>
    <name type="ordered locus">Mhun_2560</name>
</gene>